<reference key="1">
    <citation type="journal article" date="2007" name="Genome Res.">
        <title>Reductive evolution and niche adaptation inferred from the genome of Mycobacterium ulcerans, the causative agent of Buruli ulcer.</title>
        <authorList>
            <person name="Stinear T.P."/>
            <person name="Seemann T."/>
            <person name="Pidot S."/>
            <person name="Frigui W."/>
            <person name="Reysset G."/>
            <person name="Garnier T."/>
            <person name="Meurice G."/>
            <person name="Simon D."/>
            <person name="Bouchier C."/>
            <person name="Ma L."/>
            <person name="Tichit M."/>
            <person name="Porter J.L."/>
            <person name="Ryan J."/>
            <person name="Johnson P.D.R."/>
            <person name="Davies J.K."/>
            <person name="Jenkin G.A."/>
            <person name="Small P.L.C."/>
            <person name="Jones L.M."/>
            <person name="Tekaia F."/>
            <person name="Laval F."/>
            <person name="Daffe M."/>
            <person name="Parkhill J."/>
            <person name="Cole S.T."/>
        </authorList>
    </citation>
    <scope>NUCLEOTIDE SEQUENCE [LARGE SCALE GENOMIC DNA]</scope>
    <source>
        <strain>Agy99</strain>
    </source>
</reference>
<organism>
    <name type="scientific">Mycobacterium ulcerans (strain Agy99)</name>
    <dbReference type="NCBI Taxonomy" id="362242"/>
    <lineage>
        <taxon>Bacteria</taxon>
        <taxon>Bacillati</taxon>
        <taxon>Actinomycetota</taxon>
        <taxon>Actinomycetes</taxon>
        <taxon>Mycobacteriales</taxon>
        <taxon>Mycobacteriaceae</taxon>
        <taxon>Mycobacterium</taxon>
        <taxon>Mycobacterium ulcerans group</taxon>
    </lineage>
</organism>
<proteinExistence type="inferred from homology"/>
<gene>
    <name evidence="1" type="primary">fabH</name>
    <name type="ordered locus">MUL_0632</name>
</gene>
<accession>A0PLS8</accession>
<evidence type="ECO:0000255" key="1">
    <source>
        <dbReference type="HAMAP-Rule" id="MF_01815"/>
    </source>
</evidence>
<sequence>MTEIATTSGISSVGLLSVGAYRPTRVVTNDEICENIDSSDEWIYSRTGIKTRRFAAPEESAASMAIEASREAIAKAALTGSDIDGVIVATSTHFLQTPACAPIVAAALGCQNVPAFDISAGCSGFGHALGIAADMIRGGSAATILVIGTEKLSPTVDMTDRSNCFIFVDGAASVLVGHSPIQGIGPTVWGSDGEQAAAIRQDIDWISHAENPAGPRPFLRMEGTAVFRWAAFEMGKVGQQAMDAAGVKPDEIDVFIPHQANSRINELLTKNLQLRPDAVIANDIEHTGNTSAASIPLAMAELLATGAAKPGDLALLIGYGAGLSYAAQVVRMPNS</sequence>
<comment type="function">
    <text evidence="1">Catalyzes the condensation reaction of fatty acid synthesis by the addition to an acyl acceptor of two carbons from malonyl-ACP. Catalyzes the first condensation reaction which initiates fatty acid synthesis and may therefore play a role in governing the total rate of fatty acid production. Possesses both acetoacetyl-ACP synthase and acetyl transacylase activities. Its substrate specificity determines the biosynthesis of branched-chain and/or straight-chain of fatty acids.</text>
</comment>
<comment type="catalytic activity">
    <reaction evidence="1">
        <text>malonyl-[ACP] + dodecanoyl-CoA + H(+) = 3-oxotetradecanoyl-[ACP] + CO2 + CoA</text>
        <dbReference type="Rhea" id="RHEA:43640"/>
        <dbReference type="Rhea" id="RHEA-COMP:9623"/>
        <dbReference type="Rhea" id="RHEA-COMP:9645"/>
        <dbReference type="ChEBI" id="CHEBI:15378"/>
        <dbReference type="ChEBI" id="CHEBI:16526"/>
        <dbReference type="ChEBI" id="CHEBI:57287"/>
        <dbReference type="ChEBI" id="CHEBI:57375"/>
        <dbReference type="ChEBI" id="CHEBI:78449"/>
        <dbReference type="ChEBI" id="CHEBI:78473"/>
        <dbReference type="EC" id="2.3.1.301"/>
    </reaction>
    <physiologicalReaction direction="left-to-right" evidence="1">
        <dbReference type="Rhea" id="RHEA:43641"/>
    </physiologicalReaction>
</comment>
<comment type="pathway">
    <text evidence="1">Lipid metabolism; fatty acid biosynthesis.</text>
</comment>
<comment type="pathway">
    <text evidence="1">Lipid metabolism; mycolic acid biosynthesis.</text>
</comment>
<comment type="subunit">
    <text evidence="1">Homodimer.</text>
</comment>
<comment type="subcellular location">
    <subcellularLocation>
        <location evidence="1">Cytoplasm</location>
    </subcellularLocation>
</comment>
<comment type="domain">
    <text evidence="1">The last Arg residue of the ACP-binding site is essential for the weak association between ACP/AcpP and FabH.</text>
</comment>
<comment type="similarity">
    <text evidence="1">Belongs to the thiolase-like superfamily. FabH family.</text>
</comment>
<dbReference type="EC" id="2.3.1.301" evidence="1"/>
<dbReference type="EMBL" id="CP000325">
    <property type="protein sequence ID" value="ABL03297.1"/>
    <property type="molecule type" value="Genomic_DNA"/>
</dbReference>
<dbReference type="RefSeq" id="WP_011738922.1">
    <property type="nucleotide sequence ID" value="NC_008611.1"/>
</dbReference>
<dbReference type="SMR" id="A0PLS8"/>
<dbReference type="KEGG" id="mul:MUL_0632"/>
<dbReference type="eggNOG" id="COG0332">
    <property type="taxonomic scope" value="Bacteria"/>
</dbReference>
<dbReference type="HOGENOM" id="CLU_039592_4_0_11"/>
<dbReference type="UniPathway" id="UPA00094"/>
<dbReference type="UniPathway" id="UPA00915"/>
<dbReference type="Proteomes" id="UP000000765">
    <property type="component" value="Chromosome"/>
</dbReference>
<dbReference type="GO" id="GO:0005737">
    <property type="term" value="C:cytoplasm"/>
    <property type="evidence" value="ECO:0007669"/>
    <property type="project" value="UniProtKB-SubCell"/>
</dbReference>
<dbReference type="GO" id="GO:0004315">
    <property type="term" value="F:3-oxoacyl-[acyl-carrier-protein] synthase activity"/>
    <property type="evidence" value="ECO:0007669"/>
    <property type="project" value="InterPro"/>
</dbReference>
<dbReference type="GO" id="GO:0033818">
    <property type="term" value="F:beta-ketoacyl-acyl-carrier-protein synthase III activity"/>
    <property type="evidence" value="ECO:0007669"/>
    <property type="project" value="UniProtKB-UniRule"/>
</dbReference>
<dbReference type="GO" id="GO:0006633">
    <property type="term" value="P:fatty acid biosynthetic process"/>
    <property type="evidence" value="ECO:0007669"/>
    <property type="project" value="UniProtKB-UniRule"/>
</dbReference>
<dbReference type="CDD" id="cd00830">
    <property type="entry name" value="KAS_III"/>
    <property type="match status" value="1"/>
</dbReference>
<dbReference type="FunFam" id="3.40.47.10:FF:000076">
    <property type="entry name" value="3-oxoacyl-[acyl-carrier-protein] synthase 3"/>
    <property type="match status" value="1"/>
</dbReference>
<dbReference type="Gene3D" id="3.40.47.10">
    <property type="match status" value="2"/>
</dbReference>
<dbReference type="HAMAP" id="MF_01815">
    <property type="entry name" value="FabH"/>
    <property type="match status" value="1"/>
</dbReference>
<dbReference type="InterPro" id="IPR013747">
    <property type="entry name" value="ACP_syn_III_C"/>
</dbReference>
<dbReference type="InterPro" id="IPR013751">
    <property type="entry name" value="ACP_syn_III_N"/>
</dbReference>
<dbReference type="InterPro" id="IPR004655">
    <property type="entry name" value="FabH"/>
</dbReference>
<dbReference type="InterPro" id="IPR016039">
    <property type="entry name" value="Thiolase-like"/>
</dbReference>
<dbReference type="NCBIfam" id="TIGR00747">
    <property type="entry name" value="fabH"/>
    <property type="match status" value="1"/>
</dbReference>
<dbReference type="NCBIfam" id="NF006829">
    <property type="entry name" value="PRK09352.1"/>
    <property type="match status" value="1"/>
</dbReference>
<dbReference type="PANTHER" id="PTHR43091">
    <property type="entry name" value="3-OXOACYL-[ACYL-CARRIER-PROTEIN] SYNTHASE"/>
    <property type="match status" value="1"/>
</dbReference>
<dbReference type="PANTHER" id="PTHR43091:SF1">
    <property type="entry name" value="BETA-KETOACYL-[ACYL-CARRIER-PROTEIN] SYNTHASE III, CHLOROPLASTIC"/>
    <property type="match status" value="1"/>
</dbReference>
<dbReference type="Pfam" id="PF08545">
    <property type="entry name" value="ACP_syn_III"/>
    <property type="match status" value="1"/>
</dbReference>
<dbReference type="Pfam" id="PF08541">
    <property type="entry name" value="ACP_syn_III_C"/>
    <property type="match status" value="1"/>
</dbReference>
<dbReference type="SUPFAM" id="SSF53901">
    <property type="entry name" value="Thiolase-like"/>
    <property type="match status" value="1"/>
</dbReference>
<name>FABH_MYCUA</name>
<keyword id="KW-0012">Acyltransferase</keyword>
<keyword id="KW-0963">Cytoplasm</keyword>
<keyword id="KW-0275">Fatty acid biosynthesis</keyword>
<keyword id="KW-0276">Fatty acid metabolism</keyword>
<keyword id="KW-0444">Lipid biosynthesis</keyword>
<keyword id="KW-0443">Lipid metabolism</keyword>
<keyword id="KW-0511">Multifunctional enzyme</keyword>
<keyword id="KW-0808">Transferase</keyword>
<feature type="chain" id="PRO_1000056380" description="Mycobacterial beta-ketoacyl-[acyl-carrier-protein] synthase III">
    <location>
        <begin position="1"/>
        <end position="335"/>
    </location>
</feature>
<feature type="region of interest" description="ACP-binding" evidence="1">
    <location>
        <begin position="259"/>
        <end position="263"/>
    </location>
</feature>
<feature type="active site" evidence="1">
    <location>
        <position position="122"/>
    </location>
</feature>
<feature type="active site" evidence="1">
    <location>
        <position position="258"/>
    </location>
</feature>
<feature type="active site" evidence="1">
    <location>
        <position position="289"/>
    </location>
</feature>
<protein>
    <recommendedName>
        <fullName evidence="1">Mycobacterial beta-ketoacyl-[acyl-carrier-protein] synthase III</fullName>
        <shortName evidence="1">Beta-ketoacyl-ACP synthase III</shortName>
        <shortName evidence="1">KAS III</shortName>
        <ecNumber evidence="1">2.3.1.301</ecNumber>
    </recommendedName>
    <alternativeName>
        <fullName evidence="1">3-oxoacyl-[acyl-carrier-protein] synthase 3</fullName>
    </alternativeName>
    <alternativeName>
        <fullName evidence="1">3-oxoacyl-[acyl-carrier-protein] synthase III</fullName>
    </alternativeName>
</protein>